<dbReference type="EC" id="2.3.1.180" evidence="1"/>
<dbReference type="EMBL" id="CP000552">
    <property type="protein sequence ID" value="ABM71373.1"/>
    <property type="molecule type" value="Genomic_DNA"/>
</dbReference>
<dbReference type="RefSeq" id="WP_011819487.1">
    <property type="nucleotide sequence ID" value="NC_008817.1"/>
</dbReference>
<dbReference type="SMR" id="A2BUB2"/>
<dbReference type="STRING" id="167542.P9515_01641"/>
<dbReference type="GeneID" id="60201222"/>
<dbReference type="KEGG" id="pmc:P9515_01641"/>
<dbReference type="eggNOG" id="COG0332">
    <property type="taxonomic scope" value="Bacteria"/>
</dbReference>
<dbReference type="HOGENOM" id="CLU_039592_0_1_3"/>
<dbReference type="OrthoDB" id="9815506at2"/>
<dbReference type="UniPathway" id="UPA00094"/>
<dbReference type="Proteomes" id="UP000001589">
    <property type="component" value="Chromosome"/>
</dbReference>
<dbReference type="GO" id="GO:0005737">
    <property type="term" value="C:cytoplasm"/>
    <property type="evidence" value="ECO:0007669"/>
    <property type="project" value="UniProtKB-SubCell"/>
</dbReference>
<dbReference type="GO" id="GO:0004315">
    <property type="term" value="F:3-oxoacyl-[acyl-carrier-protein] synthase activity"/>
    <property type="evidence" value="ECO:0007669"/>
    <property type="project" value="InterPro"/>
</dbReference>
<dbReference type="GO" id="GO:0033818">
    <property type="term" value="F:beta-ketoacyl-acyl-carrier-protein synthase III activity"/>
    <property type="evidence" value="ECO:0007669"/>
    <property type="project" value="UniProtKB-UniRule"/>
</dbReference>
<dbReference type="GO" id="GO:0006633">
    <property type="term" value="P:fatty acid biosynthetic process"/>
    <property type="evidence" value="ECO:0007669"/>
    <property type="project" value="UniProtKB-UniRule"/>
</dbReference>
<dbReference type="CDD" id="cd00830">
    <property type="entry name" value="KAS_III"/>
    <property type="match status" value="1"/>
</dbReference>
<dbReference type="FunFam" id="3.40.47.10:FF:000004">
    <property type="entry name" value="3-oxoacyl-[acyl-carrier-protein] synthase 3"/>
    <property type="match status" value="1"/>
</dbReference>
<dbReference type="Gene3D" id="3.40.47.10">
    <property type="match status" value="1"/>
</dbReference>
<dbReference type="HAMAP" id="MF_01815">
    <property type="entry name" value="FabH"/>
    <property type="match status" value="1"/>
</dbReference>
<dbReference type="InterPro" id="IPR013747">
    <property type="entry name" value="ACP_syn_III_C"/>
</dbReference>
<dbReference type="InterPro" id="IPR013751">
    <property type="entry name" value="ACP_syn_III_N"/>
</dbReference>
<dbReference type="InterPro" id="IPR004655">
    <property type="entry name" value="FabH"/>
</dbReference>
<dbReference type="InterPro" id="IPR016039">
    <property type="entry name" value="Thiolase-like"/>
</dbReference>
<dbReference type="NCBIfam" id="TIGR00747">
    <property type="entry name" value="fabH"/>
    <property type="match status" value="1"/>
</dbReference>
<dbReference type="NCBIfam" id="NF006829">
    <property type="entry name" value="PRK09352.1"/>
    <property type="match status" value="1"/>
</dbReference>
<dbReference type="PANTHER" id="PTHR43091">
    <property type="entry name" value="3-OXOACYL-[ACYL-CARRIER-PROTEIN] SYNTHASE"/>
    <property type="match status" value="1"/>
</dbReference>
<dbReference type="PANTHER" id="PTHR43091:SF1">
    <property type="entry name" value="BETA-KETOACYL-[ACYL-CARRIER-PROTEIN] SYNTHASE III, CHLOROPLASTIC"/>
    <property type="match status" value="1"/>
</dbReference>
<dbReference type="Pfam" id="PF08545">
    <property type="entry name" value="ACP_syn_III"/>
    <property type="match status" value="1"/>
</dbReference>
<dbReference type="Pfam" id="PF08541">
    <property type="entry name" value="ACP_syn_III_C"/>
    <property type="match status" value="1"/>
</dbReference>
<dbReference type="SUPFAM" id="SSF53901">
    <property type="entry name" value="Thiolase-like"/>
    <property type="match status" value="1"/>
</dbReference>
<comment type="function">
    <text evidence="1">Catalyzes the condensation reaction of fatty acid synthesis by the addition to an acyl acceptor of two carbons from malonyl-ACP. Catalyzes the first condensation reaction which initiates fatty acid synthesis and may therefore play a role in governing the total rate of fatty acid production. Possesses both acetoacetyl-ACP synthase and acetyl transacylase activities. Its substrate specificity determines the biosynthesis of branched-chain and/or straight-chain of fatty acids.</text>
</comment>
<comment type="catalytic activity">
    <reaction evidence="1">
        <text>malonyl-[ACP] + acetyl-CoA + H(+) = 3-oxobutanoyl-[ACP] + CO2 + CoA</text>
        <dbReference type="Rhea" id="RHEA:12080"/>
        <dbReference type="Rhea" id="RHEA-COMP:9623"/>
        <dbReference type="Rhea" id="RHEA-COMP:9625"/>
        <dbReference type="ChEBI" id="CHEBI:15378"/>
        <dbReference type="ChEBI" id="CHEBI:16526"/>
        <dbReference type="ChEBI" id="CHEBI:57287"/>
        <dbReference type="ChEBI" id="CHEBI:57288"/>
        <dbReference type="ChEBI" id="CHEBI:78449"/>
        <dbReference type="ChEBI" id="CHEBI:78450"/>
        <dbReference type="EC" id="2.3.1.180"/>
    </reaction>
</comment>
<comment type="pathway">
    <text evidence="1">Lipid metabolism; fatty acid biosynthesis.</text>
</comment>
<comment type="subunit">
    <text evidence="1">Homodimer.</text>
</comment>
<comment type="subcellular location">
    <subcellularLocation>
        <location evidence="1">Cytoplasm</location>
    </subcellularLocation>
</comment>
<comment type="domain">
    <text evidence="1">The last Arg residue of the ACP-binding site is essential for the weak association between ACP/AcpP and FabH.</text>
</comment>
<comment type="similarity">
    <text evidence="1">Belongs to the thiolase-like superfamily. FabH family.</text>
</comment>
<keyword id="KW-0012">Acyltransferase</keyword>
<keyword id="KW-0963">Cytoplasm</keyword>
<keyword id="KW-0275">Fatty acid biosynthesis</keyword>
<keyword id="KW-0276">Fatty acid metabolism</keyword>
<keyword id="KW-0444">Lipid biosynthesis</keyword>
<keyword id="KW-0443">Lipid metabolism</keyword>
<keyword id="KW-0511">Multifunctional enzyme</keyword>
<keyword id="KW-0808">Transferase</keyword>
<feature type="chain" id="PRO_1000056389" description="Beta-ketoacyl-[acyl-carrier-protein] synthase III">
    <location>
        <begin position="1"/>
        <end position="335"/>
    </location>
</feature>
<feature type="region of interest" description="ACP-binding" evidence="1">
    <location>
        <begin position="262"/>
        <end position="266"/>
    </location>
</feature>
<feature type="active site" evidence="1">
    <location>
        <position position="119"/>
    </location>
</feature>
<feature type="active site" evidence="1">
    <location>
        <position position="261"/>
    </location>
</feature>
<feature type="active site" evidence="1">
    <location>
        <position position="291"/>
    </location>
</feature>
<accession>A2BUB2</accession>
<name>FABH_PROM5</name>
<gene>
    <name evidence="1" type="primary">fabH</name>
    <name type="ordered locus">P9515_01641</name>
</gene>
<protein>
    <recommendedName>
        <fullName evidence="1">Beta-ketoacyl-[acyl-carrier-protein] synthase III</fullName>
        <shortName evidence="1">Beta-ketoacyl-ACP synthase III</shortName>
        <shortName evidence="1">KAS III</shortName>
        <ecNumber evidence="1">2.3.1.180</ecNumber>
    </recommendedName>
    <alternativeName>
        <fullName evidence="1">3-oxoacyl-[acyl-carrier-protein] synthase 3</fullName>
    </alternativeName>
    <alternativeName>
        <fullName evidence="1">3-oxoacyl-[acyl-carrier-protein] synthase III</fullName>
    </alternativeName>
</protein>
<reference key="1">
    <citation type="journal article" date="2007" name="PLoS Genet.">
        <title>Patterns and implications of gene gain and loss in the evolution of Prochlorococcus.</title>
        <authorList>
            <person name="Kettler G.C."/>
            <person name="Martiny A.C."/>
            <person name="Huang K."/>
            <person name="Zucker J."/>
            <person name="Coleman M.L."/>
            <person name="Rodrigue S."/>
            <person name="Chen F."/>
            <person name="Lapidus A."/>
            <person name="Ferriera S."/>
            <person name="Johnson J."/>
            <person name="Steglich C."/>
            <person name="Church G.M."/>
            <person name="Richardson P."/>
            <person name="Chisholm S.W."/>
        </authorList>
    </citation>
    <scope>NUCLEOTIDE SEQUENCE [LARGE SCALE GENOMIC DNA]</scope>
    <source>
        <strain>MIT 9515</strain>
    </source>
</reference>
<evidence type="ECO:0000255" key="1">
    <source>
        <dbReference type="HAMAP-Rule" id="MF_01815"/>
    </source>
</evidence>
<organism>
    <name type="scientific">Prochlorococcus marinus (strain MIT 9515)</name>
    <dbReference type="NCBI Taxonomy" id="167542"/>
    <lineage>
        <taxon>Bacteria</taxon>
        <taxon>Bacillati</taxon>
        <taxon>Cyanobacteriota</taxon>
        <taxon>Cyanophyceae</taxon>
        <taxon>Synechococcales</taxon>
        <taxon>Prochlorococcaceae</taxon>
        <taxon>Prochlorococcus</taxon>
    </lineage>
</organism>
<proteinExistence type="inferred from homology"/>
<sequence length="335" mass="36571">MEVINSNQIGVSFKGSGSYVPHQILTNHEISKKVDTSDEWIKSRTGISQRRISGLSENVSEMGYKAGLAAIEMAKWDIETIDLIILATSTPHDLFGSAPEIQSKLGANNAVAFDLTAACSGFLFAVITATQFLKAGSYRRAIVIGSDQLSSYVDWNDRRSCILFGDGAGALAIEATNEFDNLIGFSMRTDGQRGSFLNLPSQKNNDQIIDNINFSSGGFSTIAMNGQEVYKFAVREVPLIIDNLFKKTNFNSEKINWLLLHQANQRILDSVGDRLNISSEKILSNLSNYGNTSAATIPLMLDEAIRNKKIKENDIIATSGFGAGLSWGAALIRWG</sequence>